<feature type="chain" id="PRO_0000456276" description="Radical SAM Nalpha-GlyT isomerase">
    <location>
        <begin position="1"/>
        <end position="480"/>
    </location>
</feature>
<feature type="region of interest" description="Disordered" evidence="1">
    <location>
        <begin position="457"/>
        <end position="480"/>
    </location>
</feature>
<feature type="binding site" evidence="5">
    <location>
        <position position="125"/>
    </location>
    <ligand>
        <name>iron-sulfur cluster</name>
        <dbReference type="ChEBI" id="CHEBI:30408"/>
    </ligand>
</feature>
<feature type="binding site" evidence="5">
    <location>
        <position position="129"/>
    </location>
    <ligand>
        <name>iron-sulfur cluster</name>
        <dbReference type="ChEBI" id="CHEBI:30408"/>
    </ligand>
</feature>
<feature type="binding site" evidence="5">
    <location>
        <position position="132"/>
    </location>
    <ligand>
        <name>iron-sulfur cluster</name>
        <dbReference type="ChEBI" id="CHEBI:30408"/>
    </ligand>
</feature>
<proteinExistence type="evidence at protein level"/>
<accession>P0DTK7</accession>
<comment type="function">
    <text evidence="2 3">Isomerizes 5-N-alpha-glycinylthymidine (Nalpha-GlyT) into 5-Calpha-glycinylthymidine (Calpha-GlyT) as a step in the pathway leading to thymidine hypermodifications in the viral genome (PubMed:34522950). As a final result of the pathway of hypermodification, 5-aminoethyl-2'-deoxyuridine (5-NedU) substitutes for about 30% of thymidines in the viral DNA (PubMed:29555775, PubMed:34522950). These modifications probably prevent degradation of viral genome by the host restriction-modification antiviral defense system (PubMed:34522950).</text>
</comment>
<comment type="catalytic activity">
    <reaction evidence="3">
        <text>5-N(alpha)-glycyl-dTMP in DNA + AH2 + S-adenosyl-L-methionine = 5-C(alpha)-glycyl-dTMP in DNA + 5'-deoxyadenosine + L-methionine + A + H(+)</text>
        <dbReference type="Rhea" id="RHEA:71551"/>
        <dbReference type="Rhea" id="RHEA-COMP:18040"/>
        <dbReference type="Rhea" id="RHEA-COMP:18042"/>
        <dbReference type="ChEBI" id="CHEBI:13193"/>
        <dbReference type="ChEBI" id="CHEBI:15378"/>
        <dbReference type="ChEBI" id="CHEBI:17319"/>
        <dbReference type="ChEBI" id="CHEBI:17499"/>
        <dbReference type="ChEBI" id="CHEBI:57844"/>
        <dbReference type="ChEBI" id="CHEBI:59789"/>
        <dbReference type="ChEBI" id="CHEBI:190919"/>
        <dbReference type="ChEBI" id="CHEBI:190924"/>
    </reaction>
</comment>
<reference key="1">
    <citation type="journal article" date="2006" name="J. Bacteriol.">
        <title>Comparative genomic analysis of 18 Pseudomonas aeruginosa bacteriophages.</title>
        <authorList>
            <person name="Kwan T."/>
            <person name="Liu J."/>
            <person name="Dubow M."/>
            <person name="Gros P."/>
            <person name="Pelletier J."/>
        </authorList>
    </citation>
    <scope>NUCLEOTIDE SEQUENCE [LARGE SCALE GENOMIC DNA]</scope>
</reference>
<reference key="2">
    <citation type="journal article" date="2018" name="Proc. Natl. Acad. Sci. U.S.A.">
        <title>Identification and biosynthesis of thymidine hypermodifications in the genomic DNA of widespread bacterial viruses.</title>
        <authorList>
            <person name="Lee Y.J."/>
            <person name="Dai N."/>
            <person name="Walsh S.E."/>
            <person name="Mueller S."/>
            <person name="Fraser M.E."/>
            <person name="Kauffman K.M."/>
            <person name="Guan C."/>
            <person name="Correa I.R. Jr."/>
            <person name="Weigele P.R."/>
        </authorList>
    </citation>
    <scope>FUNCTION</scope>
</reference>
<reference key="3">
    <citation type="journal article" date="2021" name="Nucleic Acids Res.">
        <title>Pathways of thymidine hypermodification.</title>
        <authorList>
            <person name="Lee Y.J."/>
            <person name="Dai N."/>
            <person name="Mueller S.I."/>
            <person name="Guan C."/>
            <person name="Parker M.J."/>
            <person name="Fraser M.E."/>
            <person name="Walsh S.E."/>
            <person name="Sridar J."/>
            <person name="Mulholland A."/>
            <person name="Nayak K."/>
            <person name="Sun Z."/>
            <person name="Lin Y.C."/>
            <person name="Comb D.G."/>
            <person name="Marks K."/>
            <person name="Gonzalez R."/>
            <person name="Dowling D.P."/>
            <person name="Bandarian V."/>
            <person name="Saleh L."/>
            <person name="Correa I.R."/>
            <person name="Weigele P.R."/>
        </authorList>
    </citation>
    <scope>FUNCTION</scope>
    <scope>CATALYTIC ACTIVITY</scope>
</reference>
<sequence>MDHAAWLNEETGEAAQEAYKYFMRPDPNQREFLGPIEEEDDPLTGMRAKFRMAKVGMVRNAKDEDKKEVKVYLGFNDVTYLPHIRIPNAKPLQGWYQDKHNDKRGSRARPCFSEAILTEPYGGYCTVGCAFCYVNSGFRGYRGTGLISVPVNYGEQVRNMLSKSRTSAAGYFSSFTDPFLPIEDVYHNTQQGAEAFVELGLPIFFLSRLSYPSWAIDLLKRNPYSYAQKSLNTGNDRDWHKLSPGAISLQDHIDEIAELRRQGIYTSIQVNPVVPGIVTHDDIRHLFERLAAVGNNHVIVKFVEAGYSWAPAMIERLHKRFGPERTKAFTDLFTENQAGAQKTIAEPYRVEAHQLYRKWATELGMTYATCYEYRRGKPGTGEPAWLSMGREMITADQCHGQRVPMFTRTDLDQPFQEVKECAPTGCLHCADDNEGKPRCGSELFGAAKALRSPDFKKIVEPTPPEEDGGERKIIPITQID</sequence>
<dbReference type="EMBL" id="DQ163916">
    <property type="status" value="NOT_ANNOTATED_CDS"/>
    <property type="molecule type" value="Genomic_DNA"/>
</dbReference>
<dbReference type="RefSeq" id="YP_001294561.1">
    <property type="nucleotide sequence ID" value="NC_007809.1"/>
</dbReference>
<dbReference type="GeneID" id="5237052"/>
<dbReference type="GO" id="GO:0051536">
    <property type="term" value="F:iron-sulfur cluster binding"/>
    <property type="evidence" value="ECO:0007669"/>
    <property type="project" value="UniProtKB-KW"/>
</dbReference>
<dbReference type="GO" id="GO:0016853">
    <property type="term" value="F:isomerase activity"/>
    <property type="evidence" value="ECO:0007669"/>
    <property type="project" value="UniProtKB-KW"/>
</dbReference>
<dbReference type="GO" id="GO:0046872">
    <property type="term" value="F:metal ion binding"/>
    <property type="evidence" value="ECO:0007669"/>
    <property type="project" value="UniProtKB-KW"/>
</dbReference>
<dbReference type="GO" id="GO:0099018">
    <property type="term" value="P:symbiont-mediated evasion of host restriction-modification system"/>
    <property type="evidence" value="ECO:0007669"/>
    <property type="project" value="UniProtKB-KW"/>
</dbReference>
<dbReference type="GO" id="GO:0052170">
    <property type="term" value="P:symbiont-mediated suppression of host innate immune response"/>
    <property type="evidence" value="ECO:0007669"/>
    <property type="project" value="UniProtKB-KW"/>
</dbReference>
<dbReference type="Gene3D" id="3.80.30.30">
    <property type="match status" value="1"/>
</dbReference>
<dbReference type="InterPro" id="IPR040086">
    <property type="entry name" value="MJ0683-like"/>
</dbReference>
<dbReference type="InterPro" id="IPR007197">
    <property type="entry name" value="rSAM"/>
</dbReference>
<dbReference type="PANTHER" id="PTHR43432:SF4">
    <property type="entry name" value="RADICAL SAM CORE DOMAIN-CONTAINING PROTEIN"/>
    <property type="match status" value="1"/>
</dbReference>
<dbReference type="PANTHER" id="PTHR43432">
    <property type="entry name" value="SLR0285 PROTEIN"/>
    <property type="match status" value="1"/>
</dbReference>
<dbReference type="SFLD" id="SFLDS00029">
    <property type="entry name" value="Radical_SAM"/>
    <property type="match status" value="1"/>
</dbReference>
<dbReference type="SFLD" id="SFLDG01084">
    <property type="entry name" value="Uncharacterised_Radical_SAM_Su"/>
    <property type="match status" value="1"/>
</dbReference>
<dbReference type="SUPFAM" id="SSF102114">
    <property type="entry name" value="Radical SAM enzymes"/>
    <property type="match status" value="1"/>
</dbReference>
<organism>
    <name type="scientific">Pseudomonas phage M6</name>
    <dbReference type="NCBI Taxonomy" id="2911432"/>
    <lineage>
        <taxon>Viruses</taxon>
        <taxon>Duplodnaviria</taxon>
        <taxon>Heunggongvirae</taxon>
        <taxon>Uroviricota</taxon>
        <taxon>Caudoviricetes</taxon>
        <taxon>Mesyanzhinovviridae</taxon>
        <taxon>Rabinowitzvirinae</taxon>
        <taxon>Yuavirus</taxon>
        <taxon>Pseudomonas virus M6</taxon>
    </lineage>
</organism>
<protein>
    <recommendedName>
        <fullName evidence="4">Radical SAM Nalpha-GlyT isomerase</fullName>
    </recommendedName>
    <alternativeName>
        <fullName evidence="4">gp53</fullName>
    </alternativeName>
    <alternativeName>
        <fullName evidence="4">rSAM glycinyl-thymine isomerase</fullName>
    </alternativeName>
</protein>
<name>RSAMI_BPPM6</name>
<evidence type="ECO:0000256" key="1">
    <source>
        <dbReference type="SAM" id="MobiDB-lite"/>
    </source>
</evidence>
<evidence type="ECO:0000269" key="2">
    <source>
    </source>
</evidence>
<evidence type="ECO:0000269" key="3">
    <source>
    </source>
</evidence>
<evidence type="ECO:0000303" key="4">
    <source>
    </source>
</evidence>
<evidence type="ECO:0000305" key="5">
    <source>
    </source>
</evidence>
<keyword id="KW-0945">Host-virus interaction</keyword>
<keyword id="KW-1090">Inhibition of host innate immune response by virus</keyword>
<keyword id="KW-0408">Iron</keyword>
<keyword id="KW-0411">Iron-sulfur</keyword>
<keyword id="KW-0413">Isomerase</keyword>
<keyword id="KW-0479">Metal-binding</keyword>
<keyword id="KW-1258">Restriction-modification system evasion by virus</keyword>
<keyword id="KW-0899">Viral immunoevasion</keyword>
<organismHost>
    <name type="scientific">Pseudomonas aeruginosa</name>
    <dbReference type="NCBI Taxonomy" id="287"/>
</organismHost>